<protein>
    <recommendedName>
        <fullName>ATP-dependent RNA helicase DBP9</fullName>
        <ecNumber>3.6.4.13</ecNumber>
    </recommendedName>
</protein>
<proteinExistence type="inferred from homology"/>
<dbReference type="EC" id="3.6.4.13"/>
<dbReference type="EMBL" id="CR382123">
    <property type="protein sequence ID" value="CAH01254.1"/>
    <property type="molecule type" value="Genomic_DNA"/>
</dbReference>
<dbReference type="RefSeq" id="XP_452403.1">
    <property type="nucleotide sequence ID" value="XM_452403.1"/>
</dbReference>
<dbReference type="SMR" id="Q6CUI6"/>
<dbReference type="FunCoup" id="Q6CUI6">
    <property type="interactions" value="1057"/>
</dbReference>
<dbReference type="STRING" id="284590.Q6CUI6"/>
<dbReference type="PaxDb" id="284590-Q6CUI6"/>
<dbReference type="KEGG" id="kla:KLLA0_C04576g"/>
<dbReference type="eggNOG" id="KOG0346">
    <property type="taxonomic scope" value="Eukaryota"/>
</dbReference>
<dbReference type="HOGENOM" id="CLU_003041_17_1_1"/>
<dbReference type="InParanoid" id="Q6CUI6"/>
<dbReference type="OMA" id="NASEQCV"/>
<dbReference type="Proteomes" id="UP000000598">
    <property type="component" value="Chromosome C"/>
</dbReference>
<dbReference type="GO" id="GO:0005829">
    <property type="term" value="C:cytosol"/>
    <property type="evidence" value="ECO:0007669"/>
    <property type="project" value="TreeGrafter"/>
</dbReference>
<dbReference type="GO" id="GO:0005730">
    <property type="term" value="C:nucleolus"/>
    <property type="evidence" value="ECO:0007669"/>
    <property type="project" value="UniProtKB-SubCell"/>
</dbReference>
<dbReference type="GO" id="GO:0005524">
    <property type="term" value="F:ATP binding"/>
    <property type="evidence" value="ECO:0007669"/>
    <property type="project" value="UniProtKB-KW"/>
</dbReference>
<dbReference type="GO" id="GO:0016887">
    <property type="term" value="F:ATP hydrolysis activity"/>
    <property type="evidence" value="ECO:0007669"/>
    <property type="project" value="RHEA"/>
</dbReference>
<dbReference type="GO" id="GO:0003723">
    <property type="term" value="F:RNA binding"/>
    <property type="evidence" value="ECO:0007669"/>
    <property type="project" value="UniProtKB-KW"/>
</dbReference>
<dbReference type="GO" id="GO:0003724">
    <property type="term" value="F:RNA helicase activity"/>
    <property type="evidence" value="ECO:0007669"/>
    <property type="project" value="UniProtKB-EC"/>
</dbReference>
<dbReference type="GO" id="GO:0006364">
    <property type="term" value="P:rRNA processing"/>
    <property type="evidence" value="ECO:0007669"/>
    <property type="project" value="UniProtKB-KW"/>
</dbReference>
<dbReference type="CDD" id="cd17961">
    <property type="entry name" value="DEADc_DDX56"/>
    <property type="match status" value="1"/>
</dbReference>
<dbReference type="CDD" id="cd18787">
    <property type="entry name" value="SF2_C_DEAD"/>
    <property type="match status" value="1"/>
</dbReference>
<dbReference type="Gene3D" id="3.40.50.300">
    <property type="entry name" value="P-loop containing nucleotide triphosphate hydrolases"/>
    <property type="match status" value="2"/>
</dbReference>
<dbReference type="InterPro" id="IPR011545">
    <property type="entry name" value="DEAD/DEAH_box_helicase_dom"/>
</dbReference>
<dbReference type="InterPro" id="IPR050079">
    <property type="entry name" value="DEAD_box_RNA_helicase"/>
</dbReference>
<dbReference type="InterPro" id="IPR014001">
    <property type="entry name" value="Helicase_ATP-bd"/>
</dbReference>
<dbReference type="InterPro" id="IPR001650">
    <property type="entry name" value="Helicase_C-like"/>
</dbReference>
<dbReference type="InterPro" id="IPR027417">
    <property type="entry name" value="P-loop_NTPase"/>
</dbReference>
<dbReference type="InterPro" id="IPR014014">
    <property type="entry name" value="RNA_helicase_DEAD_Q_motif"/>
</dbReference>
<dbReference type="PANTHER" id="PTHR47959">
    <property type="entry name" value="ATP-DEPENDENT RNA HELICASE RHLE-RELATED"/>
    <property type="match status" value="1"/>
</dbReference>
<dbReference type="PANTHER" id="PTHR47959:SF21">
    <property type="entry name" value="DEAD-BOX HELICASE 56"/>
    <property type="match status" value="1"/>
</dbReference>
<dbReference type="Pfam" id="PF00270">
    <property type="entry name" value="DEAD"/>
    <property type="match status" value="1"/>
</dbReference>
<dbReference type="Pfam" id="PF00271">
    <property type="entry name" value="Helicase_C"/>
    <property type="match status" value="2"/>
</dbReference>
<dbReference type="SMART" id="SM00487">
    <property type="entry name" value="DEXDc"/>
    <property type="match status" value="1"/>
</dbReference>
<dbReference type="SMART" id="SM00490">
    <property type="entry name" value="HELICc"/>
    <property type="match status" value="1"/>
</dbReference>
<dbReference type="SUPFAM" id="SSF52540">
    <property type="entry name" value="P-loop containing nucleoside triphosphate hydrolases"/>
    <property type="match status" value="2"/>
</dbReference>
<dbReference type="PROSITE" id="PS51192">
    <property type="entry name" value="HELICASE_ATP_BIND_1"/>
    <property type="match status" value="1"/>
</dbReference>
<dbReference type="PROSITE" id="PS51194">
    <property type="entry name" value="HELICASE_CTER"/>
    <property type="match status" value="1"/>
</dbReference>
<dbReference type="PROSITE" id="PS51195">
    <property type="entry name" value="Q_MOTIF"/>
    <property type="match status" value="1"/>
</dbReference>
<gene>
    <name type="primary">DBP9</name>
    <name type="ordered locus">KLLA0C04576g</name>
</gene>
<reference key="1">
    <citation type="journal article" date="2004" name="Nature">
        <title>Genome evolution in yeasts.</title>
        <authorList>
            <person name="Dujon B."/>
            <person name="Sherman D."/>
            <person name="Fischer G."/>
            <person name="Durrens P."/>
            <person name="Casaregola S."/>
            <person name="Lafontaine I."/>
            <person name="de Montigny J."/>
            <person name="Marck C."/>
            <person name="Neuveglise C."/>
            <person name="Talla E."/>
            <person name="Goffard N."/>
            <person name="Frangeul L."/>
            <person name="Aigle M."/>
            <person name="Anthouard V."/>
            <person name="Babour A."/>
            <person name="Barbe V."/>
            <person name="Barnay S."/>
            <person name="Blanchin S."/>
            <person name="Beckerich J.-M."/>
            <person name="Beyne E."/>
            <person name="Bleykasten C."/>
            <person name="Boisrame A."/>
            <person name="Boyer J."/>
            <person name="Cattolico L."/>
            <person name="Confanioleri F."/>
            <person name="de Daruvar A."/>
            <person name="Despons L."/>
            <person name="Fabre E."/>
            <person name="Fairhead C."/>
            <person name="Ferry-Dumazet H."/>
            <person name="Groppi A."/>
            <person name="Hantraye F."/>
            <person name="Hennequin C."/>
            <person name="Jauniaux N."/>
            <person name="Joyet P."/>
            <person name="Kachouri R."/>
            <person name="Kerrest A."/>
            <person name="Koszul R."/>
            <person name="Lemaire M."/>
            <person name="Lesur I."/>
            <person name="Ma L."/>
            <person name="Muller H."/>
            <person name="Nicaud J.-M."/>
            <person name="Nikolski M."/>
            <person name="Oztas S."/>
            <person name="Ozier-Kalogeropoulos O."/>
            <person name="Pellenz S."/>
            <person name="Potier S."/>
            <person name="Richard G.-F."/>
            <person name="Straub M.-L."/>
            <person name="Suleau A."/>
            <person name="Swennen D."/>
            <person name="Tekaia F."/>
            <person name="Wesolowski-Louvel M."/>
            <person name="Westhof E."/>
            <person name="Wirth B."/>
            <person name="Zeniou-Meyer M."/>
            <person name="Zivanovic Y."/>
            <person name="Bolotin-Fukuhara M."/>
            <person name="Thierry A."/>
            <person name="Bouchier C."/>
            <person name="Caudron B."/>
            <person name="Scarpelli C."/>
            <person name="Gaillardin C."/>
            <person name="Weissenbach J."/>
            <person name="Wincker P."/>
            <person name="Souciet J.-L."/>
        </authorList>
    </citation>
    <scope>NUCLEOTIDE SEQUENCE [LARGE SCALE GENOMIC DNA]</scope>
    <source>
        <strain>ATCC 8585 / CBS 2359 / DSM 70799 / NBRC 1267 / NRRL Y-1140 / WM37</strain>
    </source>
</reference>
<accession>Q6CUI6</accession>
<evidence type="ECO:0000250" key="1"/>
<evidence type="ECO:0000255" key="2">
    <source>
        <dbReference type="PROSITE-ProRule" id="PRU00541"/>
    </source>
</evidence>
<evidence type="ECO:0000255" key="3">
    <source>
        <dbReference type="PROSITE-ProRule" id="PRU00542"/>
    </source>
</evidence>
<evidence type="ECO:0000256" key="4">
    <source>
        <dbReference type="SAM" id="MobiDB-lite"/>
    </source>
</evidence>
<evidence type="ECO:0000305" key="5"/>
<name>DBP9_KLULA</name>
<feature type="chain" id="PRO_0000232343" description="ATP-dependent RNA helicase DBP9">
    <location>
        <begin position="1"/>
        <end position="594"/>
    </location>
</feature>
<feature type="domain" description="Helicase ATP-binding" evidence="2">
    <location>
        <begin position="47"/>
        <end position="229"/>
    </location>
</feature>
<feature type="domain" description="Helicase C-terminal" evidence="3">
    <location>
        <begin position="242"/>
        <end position="474"/>
    </location>
</feature>
<feature type="region of interest" description="Disordered" evidence="4">
    <location>
        <begin position="562"/>
        <end position="594"/>
    </location>
</feature>
<feature type="short sequence motif" description="Q motif">
    <location>
        <begin position="15"/>
        <end position="43"/>
    </location>
</feature>
<feature type="short sequence motif" description="DEAD box">
    <location>
        <begin position="175"/>
        <end position="178"/>
    </location>
</feature>
<feature type="compositionally biased region" description="Basic residues" evidence="4">
    <location>
        <begin position="565"/>
        <end position="584"/>
    </location>
</feature>
<feature type="compositionally biased region" description="Basic and acidic residues" evidence="4">
    <location>
        <begin position="585"/>
        <end position="594"/>
    </location>
</feature>
<feature type="binding site" evidence="2">
    <location>
        <begin position="60"/>
        <end position="67"/>
    </location>
    <ligand>
        <name>ATP</name>
        <dbReference type="ChEBI" id="CHEBI:30616"/>
    </ligand>
</feature>
<keyword id="KW-0067">ATP-binding</keyword>
<keyword id="KW-0347">Helicase</keyword>
<keyword id="KW-0378">Hydrolase</keyword>
<keyword id="KW-0547">Nucleotide-binding</keyword>
<keyword id="KW-0539">Nucleus</keyword>
<keyword id="KW-1185">Reference proteome</keyword>
<keyword id="KW-0690">Ribosome biogenesis</keyword>
<keyword id="KW-0694">RNA-binding</keyword>
<keyword id="KW-0698">rRNA processing</keyword>
<comment type="function">
    <text evidence="1">ATP-binding RNA helicase involved in the biogenesis of 60S ribosomal subunits and is required for the normal formation of 25S and 5.8S rRNAs.</text>
</comment>
<comment type="catalytic activity">
    <reaction>
        <text>ATP + H2O = ADP + phosphate + H(+)</text>
        <dbReference type="Rhea" id="RHEA:13065"/>
        <dbReference type="ChEBI" id="CHEBI:15377"/>
        <dbReference type="ChEBI" id="CHEBI:15378"/>
        <dbReference type="ChEBI" id="CHEBI:30616"/>
        <dbReference type="ChEBI" id="CHEBI:43474"/>
        <dbReference type="ChEBI" id="CHEBI:456216"/>
        <dbReference type="EC" id="3.6.4.13"/>
    </reaction>
</comment>
<comment type="subcellular location">
    <subcellularLocation>
        <location evidence="1">Nucleus</location>
        <location evidence="1">Nucleolus</location>
    </subcellularLocation>
</comment>
<comment type="domain">
    <text>The Q motif is unique to and characteristic of the DEAD box family of RNA helicases and controls ATP binding and hydrolysis.</text>
</comment>
<comment type="similarity">
    <text evidence="5">Belongs to the DEAD box helicase family. DDX56/DBP9 subfamily.</text>
</comment>
<sequence>MAQTSASQGYIDDSSSFDSFHLDSRLSQAIRSIGFKHPTLIQSSAIPLALQEKRDIIAKASTGSGKTLAYLIPVIQTILDHKKADQNDEGATLGVILVPTRELAQQVLEVVEKLIVFCSQEIKCLNLSSGNVSGNLLKSLLTENPEILIATPAKLVDLLDAQDVNIDRLKFLVIDEVDLVLTFGYQEDLTKISERLPLRKSLQTFLMSATLNDDIQHLKQQFCRSPAILKLNDDEVNKDQTKLIQYYVKVGEFDKFLLCYVIFKLGLIKGKTLIFVNNIDRGYRLKLVLEQFGIKSCILNSELPANSRQHIVEEFNKNVYQLLIATDDTEYIKEEDEDLESEKTEDGLVEVVDDSTVTTKDNAKKQKKPKLNVEKDKEYGVSRGVDFKNVACVLNFDLPTTAKSYVHRIGRTARAGKSGISISFVVPLKEFGKHKPSMIKSAKKDEKILGRIIKQQAKLGFELQPYNFDIKQVEGFRYRMEDGFRAVTQVAIREARIKELKQELLASEKLKRHFEENPHDLESLRHDKELHPARVQQHLKRVPDYLLPETARKDNKKIGFVPFHKNSHRKNGRVVKKKGNVQRKGKSDPLKSFK</sequence>
<organism>
    <name type="scientific">Kluyveromyces lactis (strain ATCC 8585 / CBS 2359 / DSM 70799 / NBRC 1267 / NRRL Y-1140 / WM37)</name>
    <name type="common">Yeast</name>
    <name type="synonym">Candida sphaerica</name>
    <dbReference type="NCBI Taxonomy" id="284590"/>
    <lineage>
        <taxon>Eukaryota</taxon>
        <taxon>Fungi</taxon>
        <taxon>Dikarya</taxon>
        <taxon>Ascomycota</taxon>
        <taxon>Saccharomycotina</taxon>
        <taxon>Saccharomycetes</taxon>
        <taxon>Saccharomycetales</taxon>
        <taxon>Saccharomycetaceae</taxon>
        <taxon>Kluyveromyces</taxon>
    </lineage>
</organism>